<comment type="function">
    <text evidence="1 6 7 8">Binds negatively charged membrane lipids, such as phosphatidylserine and phosphoinositides (PubMed:17325137, PubMed:20677810). May play a role in cell-cell adhesion processes in the retina, via homomeric interaction between octamers present on the surface of two neighboring cells (By similarity). Required for normal structure and function of the retina (PubMed:11983912, PubMed:17325137).</text>
</comment>
<comment type="subunit">
    <text evidence="1">Homooctamer of 4 homodimers; disulfide-linked. The homooctamer has a flat, cogwheel structure with a diameter of about 14 nm. Two stacked octamers can assemble to form a hexadecamer.</text>
</comment>
<comment type="subcellular location">
    <subcellularLocation>
        <location evidence="1">Secreted</location>
    </subcellularLocation>
    <subcellularLocation>
        <location evidence="7 9">Cell membrane</location>
        <topology evidence="7 8">Peripheral membrane protein</topology>
        <orientation evidence="7 9">Extracellular side</orientation>
    </subcellularLocation>
    <text evidence="8">Binds to phosphatidylserine-containing lipid membranes and embeds itself partially into the lipid bilayer. Lipid-binding requires the presence of Ca(2+) ions.</text>
</comment>
<comment type="tissue specificity">
    <text evidence="4 5 6 7">Detected in the eye cup (PubMed:11983912). Detected in retina, in the inner segment of the photoreceptors, the inner nuclear layer, the inner plexiform layer and the ganglion cell layer (at protein level) (PubMed:10915776, PubMed:11983912, PubMed:17325137). Restricted to the retina (PubMed:10023077, PubMed:10915776). At the mRNA level, detected only within the photoreceptor cell layer, most prominently within the inner segments of the photoreceptors (PubMed:10023077, PubMed:10915776). Undetectable in the inner plexiform layers and the inner nuclear layer (PubMed:10915776).</text>
</comment>
<comment type="disruption phenotype">
    <text evidence="6 7">No visible phenotype at birth (PubMed:11983912). After two months, mutant males display a profound disorganization of the inner and outer nuclear layer of the retina, with increased extracellular spaces in the region of photoreceptor ribbon synapses and the appearance of gaps, and a decrease in the number of photoreceptor cell outer segments (PubMed:11983912, PubMed:17325137). The number of cone photoreceptors is reduced threefold (PubMed:11983912). After three months, mutant males display a layer of small, cyst-like structures in the inner retina (PubMed:11983912). They have profoundly altered electroretinograms, indicating a decreased light sensitivity due to a decrease in the number of functional photoreceptors (PubMed:11983912).</text>
</comment>
<name>XLRS1_MOUSE</name>
<keyword id="KW-0130">Cell adhesion</keyword>
<keyword id="KW-1003">Cell membrane</keyword>
<keyword id="KW-1015">Disulfide bond</keyword>
<keyword id="KW-0446">Lipid-binding</keyword>
<keyword id="KW-0472">Membrane</keyword>
<keyword id="KW-1185">Reference proteome</keyword>
<keyword id="KW-0964">Secreted</keyword>
<keyword id="KW-0716">Sensory transduction</keyword>
<keyword id="KW-0732">Signal</keyword>
<keyword id="KW-0844">Vision</keyword>
<protein>
    <recommendedName>
        <fullName>Retinoschisin</fullName>
    </recommendedName>
    <alternativeName>
        <fullName>X-linked juvenile retinoschisis protein homolog</fullName>
    </alternativeName>
</protein>
<sequence>MPHKIEGFFLLLLFGYEATLGLSSTEDEGEDPWYQKACKCDCQVGANALWSAGATSLDCIPECPYHKPLGFESGEVTPDQITCSNPEQYVGWYSSWTANKARLNSQGFGCAWLSKYQDSSQWLQIDLKEIKVISGILTQGRCDIDEWVTKYSVQYRTDERLNWIYYKDQTGNNRVFYGNSDRSSTVQNLLRPPIISRFIRLIPLGWHVRIAIRMELLECASKCA</sequence>
<feature type="signal peptide" evidence="2">
    <location>
        <begin position="1"/>
        <end position="23"/>
    </location>
</feature>
<feature type="chain" id="PRO_0000022696" description="Retinoschisin">
    <location>
        <begin position="24"/>
        <end position="224"/>
    </location>
</feature>
<feature type="domain" description="F5/8 type C" evidence="3">
    <location>
        <begin position="63"/>
        <end position="219"/>
    </location>
</feature>
<feature type="disulfide bond" description="Interchain" evidence="3">
    <location>
        <position position="40"/>
    </location>
</feature>
<feature type="disulfide bond" description="Interchain (with C-223)" evidence="3">
    <location>
        <position position="59"/>
    </location>
</feature>
<feature type="disulfide bond" evidence="3">
    <location>
        <begin position="63"/>
        <end position="219"/>
    </location>
</feature>
<feature type="disulfide bond" evidence="3">
    <location>
        <begin position="110"/>
        <end position="142"/>
    </location>
</feature>
<feature type="disulfide bond" description="Interchain (with C-59)" evidence="3">
    <location>
        <position position="223"/>
    </location>
</feature>
<feature type="mutagenesis site" description="Decreases phosphatidylserine binding." evidence="7">
    <original>Y</original>
    <variation>C</variation>
    <location>
        <position position="89"/>
    </location>
</feature>
<feature type="mutagenesis site" description="Decreases phosphatidylserine binding." evidence="7">
    <original>W</original>
    <variation>C</variation>
    <location>
        <position position="92"/>
    </location>
</feature>
<accession>Q9Z1L4</accession>
<reference key="1">
    <citation type="journal article" date="1999" name="Mamm. Genome">
        <title>Isolation and characterization of the murine X-linked juvenile retinoschisis (Rs1h) gene.</title>
        <authorList>
            <person name="Gehrig A.E."/>
            <person name="Warneke-Wittstock R."/>
            <person name="Sauer C.G."/>
            <person name="Weber B.H.F."/>
        </authorList>
    </citation>
    <scope>NUCLEOTIDE SEQUENCE [GENOMIC DNA / MRNA]</scope>
    <source>
        <strain>129/SvJ</strain>
    </source>
</reference>
<reference key="2">
    <citation type="submission" date="1998-12" db="EMBL/GenBank/DDBJ databases">
        <title>Genomic structure and comparative analysis of seven contiguous genes disclose a large region with conserved gene order in human Xp22.2-p22.1.</title>
        <authorList>
            <person name="Brunner B."/>
            <person name="Todt T."/>
            <person name="Lenzner S."/>
            <person name="Stout K."/>
            <person name="Schulz U."/>
            <person name="Ropers H.-H."/>
            <person name="Kalscheuer V.M."/>
        </authorList>
    </citation>
    <scope>NUCLEOTIDE SEQUENCE [MRNA]</scope>
    <source>
        <strain>C57BL/6J</strain>
        <tissue>Eye</tissue>
    </source>
</reference>
<reference key="3">
    <citation type="journal article" date="1999" name="Gene">
        <title>The mouse X-linked juvenile retinoschisis cDNA: expression in photoreceptors.</title>
        <authorList>
            <person name="Reid S.N."/>
            <person name="Akhmedov N.B."/>
            <person name="Piriev N.I."/>
            <person name="Kozak C.A."/>
            <person name="Danciger M."/>
            <person name="Farber D.B."/>
        </authorList>
    </citation>
    <scope>NUCLEOTIDE SEQUENCE [MRNA]</scope>
    <scope>TISSUE SPECIFICITY</scope>
    <source>
        <tissue>Retina</tissue>
    </source>
</reference>
<reference key="4">
    <citation type="journal article" date="2004" name="Genome Res.">
        <title>The status, quality, and expansion of the NIH full-length cDNA project: the Mammalian Gene Collection (MGC).</title>
        <authorList>
            <consortium name="The MGC Project Team"/>
        </authorList>
    </citation>
    <scope>NUCLEOTIDE SEQUENCE [LARGE SCALE MRNA]</scope>
    <source>
        <tissue>Retina</tissue>
    </source>
</reference>
<reference key="5">
    <citation type="journal article" date="2000" name="Hum. Mol. Genet.">
        <title>Retinoschisin, the X-linked retinoschisis protein, is a secreted photoreceptor protein, and is expressed and released by Weri-Rb1 cells.</title>
        <authorList>
            <person name="Grayson C."/>
            <person name="Reid S.N."/>
            <person name="Ellis J.A."/>
            <person name="Rutherford A."/>
            <person name="Sowden J.C."/>
            <person name="Yates J.R."/>
            <person name="Farber D.B."/>
            <person name="Trump D."/>
        </authorList>
    </citation>
    <scope>TISSUE SPECIFICITY</scope>
</reference>
<reference key="6">
    <citation type="journal article" date="2002" name="Proc. Natl. Acad. Sci. U.S.A.">
        <title>Inactivation of the murine X-linked juvenile retinoschisis gene, Rs1h, suggests a role of retinoschisin in retinal cell layer organization and synaptic structure.</title>
        <authorList>
            <person name="Weber B.H."/>
            <person name="Schrewe H."/>
            <person name="Molday L.L."/>
            <person name="Gehrig A."/>
            <person name="White K.L."/>
            <person name="Seeliger M.W."/>
            <person name="Jaissle G.B."/>
            <person name="Friedburg C."/>
            <person name="Tamm E."/>
            <person name="Molday R.S."/>
        </authorList>
    </citation>
    <scope>DISRUPTION PHENOTYPE</scope>
    <scope>FUNCTION</scope>
    <scope>TISSUE SPECIFICITY</scope>
</reference>
<reference key="7">
    <citation type="journal article" date="2007" name="Invest. Ophthalmol. Vis. Sci.">
        <title>Retinoschisin is a peripheral membrane protein with affinity for anionic phospholipids and affected by divalent cations.</title>
        <authorList>
            <person name="Vijayasarathy C."/>
            <person name="Takada Y."/>
            <person name="Zeng Y."/>
            <person name="Bush R.A."/>
            <person name="Sieving P.A."/>
        </authorList>
    </citation>
    <scope>FUNCTION</scope>
    <scope>DISRUPTION PHENOTYPE</scope>
    <scope>SUBCELLULAR LOCATION</scope>
    <scope>LIPID-BINDING</scope>
    <scope>TISSUE SPECIFICITY</scope>
    <scope>MUTAGENESIS OF TYR-89 AND TRP-92</scope>
</reference>
<reference key="8">
    <citation type="journal article" date="2010" name="Biochemistry">
        <title>Retinoschisin (RS1) interacts with negatively charged lipid bilayers in the presence of Ca2+: an atomic force microscopy study.</title>
        <authorList>
            <person name="Kotova S."/>
            <person name="Vijayasarathy C."/>
            <person name="Dimitriadis E.K."/>
            <person name="Ikonomou L."/>
            <person name="Jaffe H."/>
            <person name="Sieving P.A."/>
        </authorList>
    </citation>
    <scope>SUBCELLULAR LOCATION</scope>
    <scope>LIPID-BINDING</scope>
</reference>
<gene>
    <name type="primary">Rs1</name>
    <name type="synonym">Rs1h</name>
    <name type="synonym">Xlrs1</name>
</gene>
<evidence type="ECO:0000250" key="1">
    <source>
        <dbReference type="UniProtKB" id="O15537"/>
    </source>
</evidence>
<evidence type="ECO:0000255" key="2"/>
<evidence type="ECO:0000255" key="3">
    <source>
        <dbReference type="PROSITE-ProRule" id="PRU00081"/>
    </source>
</evidence>
<evidence type="ECO:0000269" key="4">
    <source>
    </source>
</evidence>
<evidence type="ECO:0000269" key="5">
    <source>
    </source>
</evidence>
<evidence type="ECO:0000269" key="6">
    <source>
    </source>
</evidence>
<evidence type="ECO:0000269" key="7">
    <source>
    </source>
</evidence>
<evidence type="ECO:0000269" key="8">
    <source>
    </source>
</evidence>
<evidence type="ECO:0000305" key="9">
    <source>
    </source>
</evidence>
<proteinExistence type="evidence at protein level"/>
<organism>
    <name type="scientific">Mus musculus</name>
    <name type="common">Mouse</name>
    <dbReference type="NCBI Taxonomy" id="10090"/>
    <lineage>
        <taxon>Eukaryota</taxon>
        <taxon>Metazoa</taxon>
        <taxon>Chordata</taxon>
        <taxon>Craniata</taxon>
        <taxon>Vertebrata</taxon>
        <taxon>Euteleostomi</taxon>
        <taxon>Mammalia</taxon>
        <taxon>Eutheria</taxon>
        <taxon>Euarchontoglires</taxon>
        <taxon>Glires</taxon>
        <taxon>Rodentia</taxon>
        <taxon>Myomorpha</taxon>
        <taxon>Muroidea</taxon>
        <taxon>Muridae</taxon>
        <taxon>Murinae</taxon>
        <taxon>Mus</taxon>
        <taxon>Mus</taxon>
    </lineage>
</organism>
<dbReference type="EMBL" id="AF084561">
    <property type="protein sequence ID" value="AAD21808.1"/>
    <property type="molecule type" value="mRNA"/>
</dbReference>
<dbReference type="EMBL" id="AF084567">
    <property type="protein sequence ID" value="AAD21809.1"/>
    <property type="molecule type" value="Genomic_DNA"/>
</dbReference>
<dbReference type="EMBL" id="AF084562">
    <property type="protein sequence ID" value="AAD21809.1"/>
    <property type="status" value="JOINED"/>
    <property type="molecule type" value="Genomic_DNA"/>
</dbReference>
<dbReference type="EMBL" id="AF084563">
    <property type="protein sequence ID" value="AAD21809.1"/>
    <property type="status" value="JOINED"/>
    <property type="molecule type" value="Genomic_DNA"/>
</dbReference>
<dbReference type="EMBL" id="AF084564">
    <property type="protein sequence ID" value="AAD21809.1"/>
    <property type="status" value="JOINED"/>
    <property type="molecule type" value="Genomic_DNA"/>
</dbReference>
<dbReference type="EMBL" id="AF084565">
    <property type="protein sequence ID" value="AAD21809.1"/>
    <property type="status" value="JOINED"/>
    <property type="molecule type" value="Genomic_DNA"/>
</dbReference>
<dbReference type="EMBL" id="AF084566">
    <property type="protein sequence ID" value="AAD21809.1"/>
    <property type="status" value="JOINED"/>
    <property type="molecule type" value="Genomic_DNA"/>
</dbReference>
<dbReference type="EMBL" id="AJ011381">
    <property type="protein sequence ID" value="CAA09601.1"/>
    <property type="molecule type" value="mRNA"/>
</dbReference>
<dbReference type="EMBL" id="BC046422">
    <property type="protein sequence ID" value="AAH46422.1"/>
    <property type="molecule type" value="mRNA"/>
</dbReference>
<dbReference type="CCDS" id="CCDS30505.1"/>
<dbReference type="RefSeq" id="NP_035432.3">
    <property type="nucleotide sequence ID" value="NM_011302.3"/>
</dbReference>
<dbReference type="SMR" id="Q9Z1L4"/>
<dbReference type="BioGRID" id="203025">
    <property type="interactions" value="1"/>
</dbReference>
<dbReference type="FunCoup" id="Q9Z1L4">
    <property type="interactions" value="43"/>
</dbReference>
<dbReference type="IntAct" id="Q9Z1L4">
    <property type="interactions" value="1"/>
</dbReference>
<dbReference type="STRING" id="10090.ENSMUSP00000033650"/>
<dbReference type="PhosphoSitePlus" id="Q9Z1L4"/>
<dbReference type="PaxDb" id="10090-ENSMUSP00000033650"/>
<dbReference type="ProteomicsDB" id="300005"/>
<dbReference type="Antibodypedia" id="24146">
    <property type="antibodies" value="77 antibodies from 12 providers"/>
</dbReference>
<dbReference type="DNASU" id="20147"/>
<dbReference type="Ensembl" id="ENSMUST00000033650.14">
    <property type="protein sequence ID" value="ENSMUSP00000033650.8"/>
    <property type="gene ID" value="ENSMUSG00000031293.14"/>
</dbReference>
<dbReference type="GeneID" id="20147"/>
<dbReference type="KEGG" id="mmu:20147"/>
<dbReference type="UCSC" id="uc009utq.1">
    <property type="organism name" value="mouse"/>
</dbReference>
<dbReference type="AGR" id="MGI:1336189"/>
<dbReference type="CTD" id="6247"/>
<dbReference type="MGI" id="MGI:1336189">
    <property type="gene designation" value="Rs1"/>
</dbReference>
<dbReference type="VEuPathDB" id="HostDB:ENSMUSG00000031293"/>
<dbReference type="eggNOG" id="ENOG502QU6Y">
    <property type="taxonomic scope" value="Eukaryota"/>
</dbReference>
<dbReference type="GeneTree" id="ENSGT00940000161181"/>
<dbReference type="InParanoid" id="Q9Z1L4"/>
<dbReference type="OMA" id="CSNSEQY"/>
<dbReference type="OrthoDB" id="9973968at2759"/>
<dbReference type="PhylomeDB" id="Q9Z1L4"/>
<dbReference type="BioGRID-ORCS" id="20147">
    <property type="hits" value="2 hits in 77 CRISPR screens"/>
</dbReference>
<dbReference type="PRO" id="PR:Q9Z1L4"/>
<dbReference type="Proteomes" id="UP000000589">
    <property type="component" value="Chromosome X"/>
</dbReference>
<dbReference type="RNAct" id="Q9Z1L4">
    <property type="molecule type" value="protein"/>
</dbReference>
<dbReference type="Bgee" id="ENSMUSG00000031293">
    <property type="expression patterns" value="Expressed in retinal neural layer and 18 other cell types or tissues"/>
</dbReference>
<dbReference type="ExpressionAtlas" id="Q9Z1L4">
    <property type="expression patterns" value="baseline and differential"/>
</dbReference>
<dbReference type="GO" id="GO:0009986">
    <property type="term" value="C:cell surface"/>
    <property type="evidence" value="ECO:0000314"/>
    <property type="project" value="MGI"/>
</dbReference>
<dbReference type="GO" id="GO:0009897">
    <property type="term" value="C:external side of plasma membrane"/>
    <property type="evidence" value="ECO:0000314"/>
    <property type="project" value="MGI"/>
</dbReference>
<dbReference type="GO" id="GO:0005576">
    <property type="term" value="C:extracellular region"/>
    <property type="evidence" value="ECO:0000314"/>
    <property type="project" value="MGI"/>
</dbReference>
<dbReference type="GO" id="GO:0005615">
    <property type="term" value="C:extracellular space"/>
    <property type="evidence" value="ECO:0007669"/>
    <property type="project" value="Ensembl"/>
</dbReference>
<dbReference type="GO" id="GO:0098984">
    <property type="term" value="C:neuron to neuron synapse"/>
    <property type="evidence" value="ECO:0000314"/>
    <property type="project" value="ARUK-UCL"/>
</dbReference>
<dbReference type="GO" id="GO:0001917">
    <property type="term" value="C:photoreceptor inner segment"/>
    <property type="evidence" value="ECO:0000314"/>
    <property type="project" value="ARUK-UCL"/>
</dbReference>
<dbReference type="GO" id="GO:0032991">
    <property type="term" value="C:protein-containing complex"/>
    <property type="evidence" value="ECO:0000314"/>
    <property type="project" value="MGI"/>
</dbReference>
<dbReference type="GO" id="GO:0005547">
    <property type="term" value="F:phosphatidylinositol-3,4,5-trisphosphate binding"/>
    <property type="evidence" value="ECO:0000314"/>
    <property type="project" value="MGI"/>
</dbReference>
<dbReference type="GO" id="GO:0043325">
    <property type="term" value="F:phosphatidylinositol-3,4-bisphosphate binding"/>
    <property type="evidence" value="ECO:0000314"/>
    <property type="project" value="MGI"/>
</dbReference>
<dbReference type="GO" id="GO:0080025">
    <property type="term" value="F:phosphatidylinositol-3,5-bisphosphate binding"/>
    <property type="evidence" value="ECO:0000314"/>
    <property type="project" value="MGI"/>
</dbReference>
<dbReference type="GO" id="GO:0032266">
    <property type="term" value="F:phosphatidylinositol-3-phosphate binding"/>
    <property type="evidence" value="ECO:0000314"/>
    <property type="project" value="MGI"/>
</dbReference>
<dbReference type="GO" id="GO:0005546">
    <property type="term" value="F:phosphatidylinositol-4,5-bisphosphate binding"/>
    <property type="evidence" value="ECO:0000314"/>
    <property type="project" value="MGI"/>
</dbReference>
<dbReference type="GO" id="GO:0070273">
    <property type="term" value="F:phosphatidylinositol-4-phosphate binding"/>
    <property type="evidence" value="ECO:0000314"/>
    <property type="project" value="MGI"/>
</dbReference>
<dbReference type="GO" id="GO:0010314">
    <property type="term" value="F:phosphatidylinositol-5-phosphate binding"/>
    <property type="evidence" value="ECO:0000314"/>
    <property type="project" value="MGI"/>
</dbReference>
<dbReference type="GO" id="GO:0001786">
    <property type="term" value="F:phosphatidylserine binding"/>
    <property type="evidence" value="ECO:0000314"/>
    <property type="project" value="UniProtKB"/>
</dbReference>
<dbReference type="GO" id="GO:0044877">
    <property type="term" value="F:protein-containing complex binding"/>
    <property type="evidence" value="ECO:0000314"/>
    <property type="project" value="MGI"/>
</dbReference>
<dbReference type="GO" id="GO:0007155">
    <property type="term" value="P:cell adhesion"/>
    <property type="evidence" value="ECO:0007669"/>
    <property type="project" value="UniProtKB-KW"/>
</dbReference>
<dbReference type="GO" id="GO:0051260">
    <property type="term" value="P:protein homooligomerization"/>
    <property type="evidence" value="ECO:0000250"/>
    <property type="project" value="UniProtKB"/>
</dbReference>
<dbReference type="GO" id="GO:0010842">
    <property type="term" value="P:retina layer formation"/>
    <property type="evidence" value="ECO:0000315"/>
    <property type="project" value="MGI"/>
</dbReference>
<dbReference type="GO" id="GO:0007601">
    <property type="term" value="P:visual perception"/>
    <property type="evidence" value="ECO:0000315"/>
    <property type="project" value="MGI"/>
</dbReference>
<dbReference type="CDD" id="cd00057">
    <property type="entry name" value="FA58C"/>
    <property type="match status" value="1"/>
</dbReference>
<dbReference type="FunFam" id="2.60.120.260:FF:000075">
    <property type="entry name" value="Retinoschisin 1"/>
    <property type="match status" value="1"/>
</dbReference>
<dbReference type="Gene3D" id="2.60.120.260">
    <property type="entry name" value="Galactose-binding domain-like"/>
    <property type="match status" value="1"/>
</dbReference>
<dbReference type="InterPro" id="IPR000421">
    <property type="entry name" value="FA58C"/>
</dbReference>
<dbReference type="InterPro" id="IPR008979">
    <property type="entry name" value="Galactose-bd-like_sf"/>
</dbReference>
<dbReference type="InterPro" id="IPR050633">
    <property type="entry name" value="Neuropilin_MCO_CoagFactor"/>
</dbReference>
<dbReference type="PANTHER" id="PTHR46806">
    <property type="entry name" value="F5/8 TYPE C DOMAIN-CONTAINING PROTEIN"/>
    <property type="match status" value="1"/>
</dbReference>
<dbReference type="PANTHER" id="PTHR46806:SF5">
    <property type="entry name" value="F5_8 TYPE C DOMAIN-CONTAINING PROTEIN"/>
    <property type="match status" value="1"/>
</dbReference>
<dbReference type="Pfam" id="PF00754">
    <property type="entry name" value="F5_F8_type_C"/>
    <property type="match status" value="1"/>
</dbReference>
<dbReference type="SMART" id="SM00231">
    <property type="entry name" value="FA58C"/>
    <property type="match status" value="1"/>
</dbReference>
<dbReference type="SUPFAM" id="SSF49785">
    <property type="entry name" value="Galactose-binding domain-like"/>
    <property type="match status" value="1"/>
</dbReference>
<dbReference type="PROSITE" id="PS01285">
    <property type="entry name" value="FA58C_1"/>
    <property type="match status" value="1"/>
</dbReference>
<dbReference type="PROSITE" id="PS50022">
    <property type="entry name" value="FA58C_3"/>
    <property type="match status" value="1"/>
</dbReference>